<accession>A1T8W5</accession>
<evidence type="ECO:0000255" key="1">
    <source>
        <dbReference type="HAMAP-Rule" id="MF_01014"/>
    </source>
</evidence>
<sequence length="255" mass="26626">MTSVNPSSSKPSALILLPAVDVVEGRAVRLVQGQAGSETEYGSALDAAMTWQRDGAEWIHLVDLDAAFGRGSNRELLAEVVGKLDVAVELSGGIRDDDSLAAALATGCARVNLGTAALENPQWCAKVVAEHGDKVAVGLDVKIVDGQHRLRGRGWETDGGDLWTVLDRLDGEGCSRFVVTDVTKDGTLNGPNLELLTQVCERTDAPVIASGGVSSLDDLRAIATLTDRGVEGAIVGKALYAGRFTLPQALDAVGP</sequence>
<organism>
    <name type="scientific">Mycolicibacterium vanbaalenii (strain DSM 7251 / JCM 13017 / BCRC 16820 / KCTC 9966 / NRRL B-24157 / PYR-1)</name>
    <name type="common">Mycobacterium vanbaalenii</name>
    <dbReference type="NCBI Taxonomy" id="350058"/>
    <lineage>
        <taxon>Bacteria</taxon>
        <taxon>Bacillati</taxon>
        <taxon>Actinomycetota</taxon>
        <taxon>Actinomycetes</taxon>
        <taxon>Mycobacteriales</taxon>
        <taxon>Mycobacteriaceae</taxon>
        <taxon>Mycolicibacterium</taxon>
    </lineage>
</organism>
<protein>
    <recommendedName>
        <fullName evidence="1">Phosphoribosyl isomerase A</fullName>
    </recommendedName>
    <alternativeName>
        <fullName evidence="1">1-(5-phosphoribosyl)-5-[(5-phosphoribosylamino)methylideneamino] imidazole-4-carboxamide isomerase</fullName>
        <ecNumber evidence="1">5.3.1.16</ecNumber>
    </alternativeName>
    <alternativeName>
        <fullName evidence="1">N-(5'-phosphoribosyl)anthranilate isomerase</fullName>
        <shortName evidence="1">PRAI</shortName>
        <ecNumber evidence="1">5.3.1.24</ecNumber>
    </alternativeName>
    <alternativeName>
        <fullName evidence="1">Phosphoribosylformimino-5-aminoimidazole carboxamide ribotide isomerase</fullName>
    </alternativeName>
</protein>
<reference key="1">
    <citation type="submission" date="2006-12" db="EMBL/GenBank/DDBJ databases">
        <title>Complete sequence of Mycobacterium vanbaalenii PYR-1.</title>
        <authorList>
            <consortium name="US DOE Joint Genome Institute"/>
            <person name="Copeland A."/>
            <person name="Lucas S."/>
            <person name="Lapidus A."/>
            <person name="Barry K."/>
            <person name="Detter J.C."/>
            <person name="Glavina del Rio T."/>
            <person name="Hammon N."/>
            <person name="Israni S."/>
            <person name="Dalin E."/>
            <person name="Tice H."/>
            <person name="Pitluck S."/>
            <person name="Singan V."/>
            <person name="Schmutz J."/>
            <person name="Larimer F."/>
            <person name="Land M."/>
            <person name="Hauser L."/>
            <person name="Kyrpides N."/>
            <person name="Anderson I.J."/>
            <person name="Miller C."/>
            <person name="Richardson P."/>
        </authorList>
    </citation>
    <scope>NUCLEOTIDE SEQUENCE [LARGE SCALE GENOMIC DNA]</scope>
    <source>
        <strain>DSM 7251 / JCM 13017 / BCRC 16820 / KCTC 9966 / NRRL B-24157 / PYR-1</strain>
    </source>
</reference>
<dbReference type="EC" id="5.3.1.16" evidence="1"/>
<dbReference type="EC" id="5.3.1.24" evidence="1"/>
<dbReference type="EMBL" id="CP000511">
    <property type="protein sequence ID" value="ABM13615.1"/>
    <property type="molecule type" value="Genomic_DNA"/>
</dbReference>
<dbReference type="SMR" id="A1T8W5"/>
<dbReference type="STRING" id="350058.Mvan_2808"/>
<dbReference type="KEGG" id="mva:Mvan_2808"/>
<dbReference type="eggNOG" id="COG0106">
    <property type="taxonomic scope" value="Bacteria"/>
</dbReference>
<dbReference type="HOGENOM" id="CLU_048577_1_1_11"/>
<dbReference type="UniPathway" id="UPA00031">
    <property type="reaction ID" value="UER00009"/>
</dbReference>
<dbReference type="UniPathway" id="UPA00035">
    <property type="reaction ID" value="UER00042"/>
</dbReference>
<dbReference type="Proteomes" id="UP000009159">
    <property type="component" value="Chromosome"/>
</dbReference>
<dbReference type="GO" id="GO:0005737">
    <property type="term" value="C:cytoplasm"/>
    <property type="evidence" value="ECO:0007669"/>
    <property type="project" value="UniProtKB-SubCell"/>
</dbReference>
<dbReference type="GO" id="GO:0003949">
    <property type="term" value="F:1-(5-phosphoribosyl)-5-[(5-phosphoribosylamino)methylideneamino]imidazole-4-carboxamide isomerase activity"/>
    <property type="evidence" value="ECO:0007669"/>
    <property type="project" value="UniProtKB-UniRule"/>
</dbReference>
<dbReference type="GO" id="GO:0004640">
    <property type="term" value="F:phosphoribosylanthranilate isomerase activity"/>
    <property type="evidence" value="ECO:0007669"/>
    <property type="project" value="UniProtKB-UniRule"/>
</dbReference>
<dbReference type="GO" id="GO:0000105">
    <property type="term" value="P:L-histidine biosynthetic process"/>
    <property type="evidence" value="ECO:0007669"/>
    <property type="project" value="UniProtKB-UniRule"/>
</dbReference>
<dbReference type="GO" id="GO:0000162">
    <property type="term" value="P:L-tryptophan biosynthetic process"/>
    <property type="evidence" value="ECO:0007669"/>
    <property type="project" value="UniProtKB-UniRule"/>
</dbReference>
<dbReference type="CDD" id="cd04732">
    <property type="entry name" value="HisA"/>
    <property type="match status" value="1"/>
</dbReference>
<dbReference type="FunFam" id="3.20.20.70:FF:000009">
    <property type="entry name" value="1-(5-phosphoribosyl)-5-[(5-phosphoribosylamino)methylideneamino] imidazole-4-carboxamide isomerase"/>
    <property type="match status" value="1"/>
</dbReference>
<dbReference type="Gene3D" id="3.20.20.70">
    <property type="entry name" value="Aldolase class I"/>
    <property type="match status" value="1"/>
</dbReference>
<dbReference type="HAMAP" id="MF_01014">
    <property type="entry name" value="HisA"/>
    <property type="match status" value="1"/>
</dbReference>
<dbReference type="InterPro" id="IPR013785">
    <property type="entry name" value="Aldolase_TIM"/>
</dbReference>
<dbReference type="InterPro" id="IPR006062">
    <property type="entry name" value="His_biosynth"/>
</dbReference>
<dbReference type="InterPro" id="IPR010188">
    <property type="entry name" value="HisA/PriA_Actinobacteria"/>
</dbReference>
<dbReference type="InterPro" id="IPR044524">
    <property type="entry name" value="Isoase_HisA-like"/>
</dbReference>
<dbReference type="InterPro" id="IPR023016">
    <property type="entry name" value="Isoase_HisA-like_bact"/>
</dbReference>
<dbReference type="InterPro" id="IPR011060">
    <property type="entry name" value="RibuloseP-bd_barrel"/>
</dbReference>
<dbReference type="NCBIfam" id="TIGR01919">
    <property type="entry name" value="hisA-trpF"/>
    <property type="match status" value="1"/>
</dbReference>
<dbReference type="PANTHER" id="PTHR43090">
    <property type="entry name" value="1-(5-PHOSPHORIBOSYL)-5-[(5-PHOSPHORIBOSYLAMINO)METHYLIDENEAMINO] IMIDAZOLE-4-CARBOXAMIDE ISOMERASE"/>
    <property type="match status" value="1"/>
</dbReference>
<dbReference type="PANTHER" id="PTHR43090:SF2">
    <property type="entry name" value="1-(5-PHOSPHORIBOSYL)-5-[(5-PHOSPHORIBOSYLAMINO)METHYLIDENEAMINO] IMIDAZOLE-4-CARBOXAMIDE ISOMERASE"/>
    <property type="match status" value="1"/>
</dbReference>
<dbReference type="Pfam" id="PF00977">
    <property type="entry name" value="His_biosynth"/>
    <property type="match status" value="1"/>
</dbReference>
<dbReference type="SUPFAM" id="SSF51366">
    <property type="entry name" value="Ribulose-phoshate binding barrel"/>
    <property type="match status" value="1"/>
</dbReference>
<keyword id="KW-0028">Amino-acid biosynthesis</keyword>
<keyword id="KW-0057">Aromatic amino acid biosynthesis</keyword>
<keyword id="KW-0963">Cytoplasm</keyword>
<keyword id="KW-0368">Histidine biosynthesis</keyword>
<keyword id="KW-0413">Isomerase</keyword>
<keyword id="KW-0822">Tryptophan biosynthesis</keyword>
<name>HIS4_MYCVP</name>
<proteinExistence type="inferred from homology"/>
<gene>
    <name evidence="1" type="primary">priA</name>
    <name evidence="1" type="synonym">hisA</name>
    <name type="ordered locus">Mvan_2808</name>
</gene>
<feature type="chain" id="PRO_0000290570" description="Phosphoribosyl isomerase A">
    <location>
        <begin position="1"/>
        <end position="255"/>
    </location>
</feature>
<feature type="active site" description="Proton acceptor" evidence="1">
    <location>
        <position position="21"/>
    </location>
</feature>
<feature type="active site" description="Proton donor" evidence="1">
    <location>
        <position position="140"/>
    </location>
</feature>
<comment type="function">
    <text evidence="1">Involved in both the histidine and tryptophan biosynthetic pathways.</text>
</comment>
<comment type="catalytic activity">
    <reaction evidence="1">
        <text>1-(5-phospho-beta-D-ribosyl)-5-[(5-phospho-beta-D-ribosylamino)methylideneamino]imidazole-4-carboxamide = 5-[(5-phospho-1-deoxy-D-ribulos-1-ylimino)methylamino]-1-(5-phospho-beta-D-ribosyl)imidazole-4-carboxamide</text>
        <dbReference type="Rhea" id="RHEA:15469"/>
        <dbReference type="ChEBI" id="CHEBI:58435"/>
        <dbReference type="ChEBI" id="CHEBI:58525"/>
        <dbReference type="EC" id="5.3.1.16"/>
    </reaction>
</comment>
<comment type="catalytic activity">
    <reaction evidence="1">
        <text>N-(5-phospho-beta-D-ribosyl)anthranilate = 1-(2-carboxyphenylamino)-1-deoxy-D-ribulose 5-phosphate</text>
        <dbReference type="Rhea" id="RHEA:21540"/>
        <dbReference type="ChEBI" id="CHEBI:18277"/>
        <dbReference type="ChEBI" id="CHEBI:58613"/>
        <dbReference type="EC" id="5.3.1.24"/>
    </reaction>
</comment>
<comment type="pathway">
    <text evidence="1">Amino-acid biosynthesis; L-histidine biosynthesis; L-histidine from 5-phospho-alpha-D-ribose 1-diphosphate: step 4/9.</text>
</comment>
<comment type="pathway">
    <text evidence="1">Amino-acid biosynthesis; L-tryptophan biosynthesis; L-tryptophan from chorismate: step 3/5.</text>
</comment>
<comment type="subcellular location">
    <subcellularLocation>
        <location evidence="1">Cytoplasm</location>
    </subcellularLocation>
</comment>
<comment type="similarity">
    <text evidence="1">Belongs to the HisA/HisF family.</text>
</comment>